<sequence>MSLFLSNVILHQLRKNDNDELVVNYRAESLRNDTSTENLVAELHRVFNAKAGKGFGCFKSDSEFQLWLQEMRRGTLPFYEFSQQSAQRLKNELAKYPFADEGILVMAEYQSLATDYLFIGLLPLNQSLKVTEGLDISATDYLDINKMDIVARIDLSSYETDKESKRYLSYIKGRVGRKVADFFLDFLQADIGLDTKQQNQVLMQAVEDFCADAKFEKEEVISYKKQVYEYCNDQIKAGDEVRVQELSGELPPSNEGVNFFDFTREQGYQLEESFPADRSTVRKLTKYVGAGGGLNLSFDSLLLGERVFYDPETDTLTIKGTPPNLRDQLTRLR</sequence>
<keyword id="KW-0963">Cytoplasm</keyword>
<keyword id="KW-1185">Reference proteome</keyword>
<evidence type="ECO:0000255" key="1">
    <source>
        <dbReference type="HAMAP-Rule" id="MF_00730"/>
    </source>
</evidence>
<proteinExistence type="inferred from homology"/>
<name>NDPA_VIBCH</name>
<organism>
    <name type="scientific">Vibrio cholerae serotype O1 (strain ATCC 39315 / El Tor Inaba N16961)</name>
    <dbReference type="NCBI Taxonomy" id="243277"/>
    <lineage>
        <taxon>Bacteria</taxon>
        <taxon>Pseudomonadati</taxon>
        <taxon>Pseudomonadota</taxon>
        <taxon>Gammaproteobacteria</taxon>
        <taxon>Vibrionales</taxon>
        <taxon>Vibrionaceae</taxon>
        <taxon>Vibrio</taxon>
    </lineage>
</organism>
<protein>
    <recommendedName>
        <fullName evidence="1">Nucleoid-associated protein VC_2039</fullName>
    </recommendedName>
</protein>
<comment type="subcellular location">
    <subcellularLocation>
        <location evidence="1">Cytoplasm</location>
        <location evidence="1">Nucleoid</location>
    </subcellularLocation>
</comment>
<comment type="similarity">
    <text evidence="1">Belongs to the YejK family.</text>
</comment>
<dbReference type="EMBL" id="AE003852">
    <property type="protein sequence ID" value="AAF95187.1"/>
    <property type="molecule type" value="Genomic_DNA"/>
</dbReference>
<dbReference type="PIR" id="A82126">
    <property type="entry name" value="A82126"/>
</dbReference>
<dbReference type="RefSeq" id="NP_231673.1">
    <property type="nucleotide sequence ID" value="NC_002505.1"/>
</dbReference>
<dbReference type="SMR" id="Q9KQF9"/>
<dbReference type="STRING" id="243277.VC_2039"/>
<dbReference type="DNASU" id="2613418"/>
<dbReference type="EnsemblBacteria" id="AAF95187">
    <property type="protein sequence ID" value="AAF95187"/>
    <property type="gene ID" value="VC_2039"/>
</dbReference>
<dbReference type="KEGG" id="vch:VC_2039"/>
<dbReference type="PATRIC" id="fig|243277.26.peg.1947"/>
<dbReference type="eggNOG" id="COG3081">
    <property type="taxonomic scope" value="Bacteria"/>
</dbReference>
<dbReference type="HOGENOM" id="CLU_063050_0_1_6"/>
<dbReference type="Proteomes" id="UP000000584">
    <property type="component" value="Chromosome 1"/>
</dbReference>
<dbReference type="GO" id="GO:0043590">
    <property type="term" value="C:bacterial nucleoid"/>
    <property type="evidence" value="ECO:0000318"/>
    <property type="project" value="GO_Central"/>
</dbReference>
<dbReference type="GO" id="GO:0005737">
    <property type="term" value="C:cytoplasm"/>
    <property type="evidence" value="ECO:0007669"/>
    <property type="project" value="UniProtKB-UniRule"/>
</dbReference>
<dbReference type="GO" id="GO:0003690">
    <property type="term" value="F:double-stranded DNA binding"/>
    <property type="evidence" value="ECO:0000318"/>
    <property type="project" value="GO_Central"/>
</dbReference>
<dbReference type="GO" id="GO:0003727">
    <property type="term" value="F:single-stranded RNA binding"/>
    <property type="evidence" value="ECO:0000318"/>
    <property type="project" value="GO_Central"/>
</dbReference>
<dbReference type="HAMAP" id="MF_00730">
    <property type="entry name" value="NdpA"/>
    <property type="match status" value="1"/>
</dbReference>
<dbReference type="InterPro" id="IPR007358">
    <property type="entry name" value="Nucleoid_associated_NdpA"/>
</dbReference>
<dbReference type="NCBIfam" id="NF001557">
    <property type="entry name" value="PRK00378.1"/>
    <property type="match status" value="1"/>
</dbReference>
<dbReference type="PANTHER" id="PTHR38772">
    <property type="match status" value="1"/>
</dbReference>
<dbReference type="PANTHER" id="PTHR38772:SF1">
    <property type="entry name" value="NUCLEOID-ASSOCIATED PROTEIN YEJK"/>
    <property type="match status" value="1"/>
</dbReference>
<dbReference type="Pfam" id="PF04245">
    <property type="entry name" value="NA37"/>
    <property type="match status" value="1"/>
</dbReference>
<accession>Q9KQF9</accession>
<feature type="chain" id="PRO_0000210921" description="Nucleoid-associated protein VC_2039">
    <location>
        <begin position="1"/>
        <end position="333"/>
    </location>
</feature>
<gene>
    <name type="ordered locus">VC_2039</name>
</gene>
<reference key="1">
    <citation type="journal article" date="2000" name="Nature">
        <title>DNA sequence of both chromosomes of the cholera pathogen Vibrio cholerae.</title>
        <authorList>
            <person name="Heidelberg J.F."/>
            <person name="Eisen J.A."/>
            <person name="Nelson W.C."/>
            <person name="Clayton R.A."/>
            <person name="Gwinn M.L."/>
            <person name="Dodson R.J."/>
            <person name="Haft D.H."/>
            <person name="Hickey E.K."/>
            <person name="Peterson J.D."/>
            <person name="Umayam L.A."/>
            <person name="Gill S.R."/>
            <person name="Nelson K.E."/>
            <person name="Read T.D."/>
            <person name="Tettelin H."/>
            <person name="Richardson D.L."/>
            <person name="Ermolaeva M.D."/>
            <person name="Vamathevan J.J."/>
            <person name="Bass S."/>
            <person name="Qin H."/>
            <person name="Dragoi I."/>
            <person name="Sellers P."/>
            <person name="McDonald L.A."/>
            <person name="Utterback T.R."/>
            <person name="Fleischmann R.D."/>
            <person name="Nierman W.C."/>
            <person name="White O."/>
            <person name="Salzberg S.L."/>
            <person name="Smith H.O."/>
            <person name="Colwell R.R."/>
            <person name="Mekalanos J.J."/>
            <person name="Venter J.C."/>
            <person name="Fraser C.M."/>
        </authorList>
    </citation>
    <scope>NUCLEOTIDE SEQUENCE [LARGE SCALE GENOMIC DNA]</scope>
    <source>
        <strain>ATCC 39315 / El Tor Inaba N16961</strain>
    </source>
</reference>